<organismHost>
    <name type="scientific">Cynomys gunnisoni</name>
    <name type="common">Gunnison's prairie dog</name>
    <name type="synonym">Spermophilus gunnisoni</name>
    <dbReference type="NCBI Taxonomy" id="45479"/>
</organismHost>
<organismHost>
    <name type="scientific">Cynomys leucurus</name>
    <name type="common">White-tailed prairie dog</name>
    <dbReference type="NCBI Taxonomy" id="99825"/>
</organismHost>
<organismHost>
    <name type="scientific">Cynomys ludovicianus</name>
    <name type="common">Black-tailed prairie dog</name>
    <dbReference type="NCBI Taxonomy" id="45480"/>
</organismHost>
<organismHost>
    <name type="scientific">Cynomys mexicanus</name>
    <name type="common">Mexican prairie dog</name>
    <dbReference type="NCBI Taxonomy" id="99826"/>
</organismHost>
<organismHost>
    <name type="scientific">Cynomys parvidens</name>
    <name type="common">Utah prairie dog</name>
    <dbReference type="NCBI Taxonomy" id="99827"/>
</organismHost>
<organismHost>
    <name type="scientific">Gliridae</name>
    <name type="common">dormice</name>
    <dbReference type="NCBI Taxonomy" id="30650"/>
</organismHost>
<organismHost>
    <name type="scientific">Heliosciurus ruwenzorii</name>
    <name type="common">Ruwenzori sun squirrel</name>
    <dbReference type="NCBI Taxonomy" id="226685"/>
</organismHost>
<organismHost>
    <name type="scientific">Homo sapiens</name>
    <name type="common">Human</name>
    <dbReference type="NCBI Taxonomy" id="9606"/>
</organismHost>
<organismHost>
    <name type="scientific">Mus musculus</name>
    <name type="common">Mouse</name>
    <dbReference type="NCBI Taxonomy" id="10090"/>
</organismHost>
<sequence>MRSIAGLDKLKMEIFNVEELINMKPFKNMNKITINQKDNCILANRCFVKIDTPRYIPSTSISSSNIIRIRNHDFTLSELLYSPFHFQQPQFQYLLPGFVLTCIDKVSKQQKECKYCISNRGDDDSLSINIFIPTINKSIYIIIGLRMKNFWKPKFEIE</sequence>
<evidence type="ECO:0000250" key="1">
    <source>
        <dbReference type="UniProtKB" id="Q80HX4"/>
    </source>
</evidence>
<evidence type="ECO:0000305" key="2"/>
<protein>
    <recommendedName>
        <fullName>Protein OPG060</fullName>
    </recommendedName>
</protein>
<gene>
    <name type="primary">OPG060</name>
    <name type="ORF">MPXVgp047</name>
</gene>
<reference key="1">
    <citation type="journal article" date="2022" name="J. Infect. Dis.">
        <title>Exportation of Monkeypox virus from the African continent.</title>
        <authorList>
            <person name="Mauldin M.R."/>
            <person name="McCollum A.M."/>
            <person name="Nakazawa Y.J."/>
            <person name="Mandra A."/>
            <person name="Whitehouse E.R."/>
            <person name="Davidson W."/>
            <person name="Zhao H."/>
            <person name="Gao J."/>
            <person name="Li Y."/>
            <person name="Doty J."/>
            <person name="Yinka-Ogunleye A."/>
            <person name="Akinpelu A."/>
            <person name="Aruna O."/>
            <person name="Naidoo D."/>
            <person name="Lewandowski K."/>
            <person name="Afrough B."/>
            <person name="Graham V."/>
            <person name="Aarons E."/>
            <person name="Hewson R."/>
            <person name="Vipond R."/>
            <person name="Dunning J."/>
            <person name="Chand M."/>
            <person name="Brown C."/>
            <person name="Cohen-Gihon I."/>
            <person name="Erez N."/>
            <person name="Shifman O."/>
            <person name="Israeli O."/>
            <person name="Sharon M."/>
            <person name="Schwartz E."/>
            <person name="Beth-Din A."/>
            <person name="Zvi A."/>
            <person name="Mak T.M."/>
            <person name="Ng Y.K."/>
            <person name="Cui L."/>
            <person name="Lin R.T.P."/>
            <person name="Olson V.A."/>
            <person name="Brooks T."/>
            <person name="Paran N."/>
            <person name="Ihekweazu C."/>
            <person name="Reynolds M.G."/>
        </authorList>
    </citation>
    <scope>NUCLEOTIDE SEQUENCE [LARGE SCALE GENOMIC DNA]</scope>
    <source>
        <strain>MPXV-M5312_HM12_Rivers</strain>
    </source>
</reference>
<feature type="chain" id="PRO_0000457655" description="Protein OPG060">
    <location>
        <begin position="1"/>
        <end position="158"/>
    </location>
</feature>
<proteinExistence type="inferred from homology"/>
<keyword id="KW-0244">Early protein</keyword>
<keyword id="KW-1185">Reference proteome</keyword>
<name>PG060_MONPV</name>
<organism>
    <name type="scientific">Monkeypox virus</name>
    <dbReference type="NCBI Taxonomy" id="10244"/>
    <lineage>
        <taxon>Viruses</taxon>
        <taxon>Varidnaviria</taxon>
        <taxon>Bamfordvirae</taxon>
        <taxon>Nucleocytoviricota</taxon>
        <taxon>Pokkesviricetes</taxon>
        <taxon>Chitovirales</taxon>
        <taxon>Poxviridae</taxon>
        <taxon>Chordopoxvirinae</taxon>
        <taxon>Orthopoxvirus</taxon>
    </lineage>
</organism>
<accession>A0A7H0DN33</accession>
<dbReference type="EMBL" id="MT903340">
    <property type="protein sequence ID" value="QNP12916.1"/>
    <property type="molecule type" value="Genomic_DNA"/>
</dbReference>
<dbReference type="RefSeq" id="NP_536474.1">
    <property type="nucleotide sequence ID" value="NC_003310.1"/>
</dbReference>
<dbReference type="RefSeq" id="YP_010377043.1">
    <property type="nucleotide sequence ID" value="NC_063383.1"/>
</dbReference>
<dbReference type="GeneID" id="72551456"/>
<dbReference type="GeneID" id="928980"/>
<dbReference type="KEGG" id="vg:928980"/>
<dbReference type="Proteomes" id="UP000516359">
    <property type="component" value="Genome"/>
</dbReference>
<dbReference type="InterPro" id="IPR007675">
    <property type="entry name" value="Poxvirus_F15"/>
</dbReference>
<dbReference type="Pfam" id="PF04596">
    <property type="entry name" value="Pox_F15"/>
    <property type="match status" value="1"/>
</dbReference>
<dbReference type="PIRSF" id="PIRSF015694">
    <property type="entry name" value="VAC_F15L"/>
    <property type="match status" value="1"/>
</dbReference>
<comment type="induction">
    <text evidence="1">Expressed in the early phase of the viral replicative cycle.</text>
</comment>
<comment type="similarity">
    <text evidence="2">Belongs to the orthopoxvirus OPG058 family.</text>
</comment>